<dbReference type="EC" id="1.17.99.9" evidence="1"/>
<dbReference type="EMBL" id="CP000703">
    <property type="protein sequence ID" value="ABQ48975.1"/>
    <property type="status" value="ALT_INIT"/>
    <property type="molecule type" value="Genomic_DNA"/>
</dbReference>
<dbReference type="RefSeq" id="WP_000467123.1">
    <property type="nucleotide sequence ID" value="NC_009487.1"/>
</dbReference>
<dbReference type="SMR" id="A5IS02"/>
<dbReference type="KEGG" id="saj:SaurJH9_1175"/>
<dbReference type="HOGENOM" id="CLU_041525_3_1_9"/>
<dbReference type="UniPathway" id="UPA00269">
    <property type="reaction ID" value="UER00713"/>
</dbReference>
<dbReference type="GO" id="GO:0005886">
    <property type="term" value="C:plasma membrane"/>
    <property type="evidence" value="ECO:0007669"/>
    <property type="project" value="UniProtKB-SubCell"/>
</dbReference>
<dbReference type="GO" id="GO:0046872">
    <property type="term" value="F:metal ion binding"/>
    <property type="evidence" value="ECO:0007669"/>
    <property type="project" value="UniProtKB-KW"/>
</dbReference>
<dbReference type="GO" id="GO:0016653">
    <property type="term" value="F:oxidoreductase activity, acting on NAD(P)H, heme protein as acceptor"/>
    <property type="evidence" value="ECO:0007669"/>
    <property type="project" value="InterPro"/>
</dbReference>
<dbReference type="GO" id="GO:0006784">
    <property type="term" value="P:heme A biosynthetic process"/>
    <property type="evidence" value="ECO:0007669"/>
    <property type="project" value="UniProtKB-UniRule"/>
</dbReference>
<dbReference type="HAMAP" id="MF_01664">
    <property type="entry name" value="HemeA_synth_type1"/>
    <property type="match status" value="1"/>
</dbReference>
<dbReference type="InterPro" id="IPR003780">
    <property type="entry name" value="COX15/CtaA_fam"/>
</dbReference>
<dbReference type="InterPro" id="IPR050450">
    <property type="entry name" value="COX15/CtaA_HemeA_synthase"/>
</dbReference>
<dbReference type="InterPro" id="IPR023755">
    <property type="entry name" value="HemeA_Synthase_type1"/>
</dbReference>
<dbReference type="PANTHER" id="PTHR35457">
    <property type="entry name" value="HEME A SYNTHASE"/>
    <property type="match status" value="1"/>
</dbReference>
<dbReference type="PANTHER" id="PTHR35457:SF1">
    <property type="entry name" value="HEME A SYNTHASE"/>
    <property type="match status" value="1"/>
</dbReference>
<dbReference type="Pfam" id="PF02628">
    <property type="entry name" value="COX15-CtaA"/>
    <property type="match status" value="1"/>
</dbReference>
<comment type="function">
    <text evidence="1">Catalyzes the conversion of heme O to heme A by two successive hydroxylations of the methyl group at C8. The first hydroxylation forms heme I, the second hydroxylation results in an unstable dihydroxymethyl group, which spontaneously dehydrates, resulting in the formyl group of heme A.</text>
</comment>
<comment type="catalytic activity">
    <reaction evidence="1">
        <text>Fe(II)-heme o + 2 A + H2O = Fe(II)-heme a + 2 AH2</text>
        <dbReference type="Rhea" id="RHEA:63388"/>
        <dbReference type="ChEBI" id="CHEBI:13193"/>
        <dbReference type="ChEBI" id="CHEBI:15377"/>
        <dbReference type="ChEBI" id="CHEBI:17499"/>
        <dbReference type="ChEBI" id="CHEBI:60530"/>
        <dbReference type="ChEBI" id="CHEBI:61715"/>
        <dbReference type="EC" id="1.17.99.9"/>
    </reaction>
    <physiologicalReaction direction="left-to-right" evidence="1">
        <dbReference type="Rhea" id="RHEA:63389"/>
    </physiologicalReaction>
</comment>
<comment type="cofactor">
    <cofactor evidence="1">
        <name>heme b</name>
        <dbReference type="ChEBI" id="CHEBI:60344"/>
    </cofactor>
</comment>
<comment type="pathway">
    <text evidence="1">Porphyrin-containing compound metabolism; heme A biosynthesis; heme A from heme O: step 1/1.</text>
</comment>
<comment type="subunit">
    <text evidence="1">Interacts with CtaB.</text>
</comment>
<comment type="subcellular location">
    <subcellularLocation>
        <location evidence="1">Cell membrane</location>
        <topology evidence="1">Multi-pass membrane protein</topology>
    </subcellularLocation>
</comment>
<comment type="domain">
    <text evidence="1">The N-half (TM1-TM4) and C-half (TM5-TM8) domains are connected by an intracellular loop. Each domain is formed from four-helix bundles and they align in a pseudo twofold symmetry manner. The N-half domain is the substrate-heme O binding domain and the C-half domain is the cofactor heme B binding domain.</text>
</comment>
<comment type="domain">
    <text evidence="1">The cysteines of disulfide bond Cys-37 and Cys-44 may be involved in transfer of reducing equivalents from quinol in the membrane to the active site of the enzyme.</text>
</comment>
<comment type="similarity">
    <text evidence="1">Belongs to the COX15/CtaA family. Type 1 subfamily.</text>
</comment>
<comment type="sequence caution" evidence="2">
    <conflict type="erroneous initiation">
        <sequence resource="EMBL-CDS" id="ABQ48975"/>
    </conflict>
</comment>
<feature type="chain" id="PRO_0000348990" description="Heme A synthase">
    <location>
        <begin position="1"/>
        <end position="303"/>
    </location>
</feature>
<feature type="topological domain" description="Cytoplasmic" evidence="1">
    <location>
        <begin position="1"/>
        <end position="8"/>
    </location>
</feature>
<feature type="transmembrane region" description="Helical" evidence="1">
    <location>
        <begin position="9"/>
        <end position="29"/>
    </location>
</feature>
<feature type="topological domain" description="Extracellular" evidence="1">
    <location>
        <begin position="30"/>
        <end position="67"/>
    </location>
</feature>
<feature type="transmembrane region" description="Helical" evidence="1">
    <location>
        <begin position="68"/>
        <end position="88"/>
    </location>
</feature>
<feature type="topological domain" description="Cytoplasmic" evidence="1">
    <location>
        <begin position="89"/>
        <end position="93"/>
    </location>
</feature>
<feature type="transmembrane region" description="Helical" evidence="1">
    <location>
        <begin position="94"/>
        <end position="114"/>
    </location>
</feature>
<feature type="topological domain" description="Extracellular" evidence="1">
    <location>
        <begin position="115"/>
        <end position="125"/>
    </location>
</feature>
<feature type="transmembrane region" description="Helical" evidence="1">
    <location>
        <begin position="126"/>
        <end position="146"/>
    </location>
</feature>
<feature type="topological domain" description="Cytoplasmic" evidence="1">
    <location>
        <begin position="147"/>
        <end position="163"/>
    </location>
</feature>
<feature type="transmembrane region" description="Helical" evidence="1">
    <location>
        <begin position="164"/>
        <end position="184"/>
    </location>
</feature>
<feature type="topological domain" description="Extracellular" evidence="1">
    <location>
        <begin position="185"/>
        <end position="215"/>
    </location>
</feature>
<feature type="transmembrane region" description="Helical" evidence="1">
    <location>
        <begin position="216"/>
        <end position="236"/>
    </location>
</feature>
<feature type="topological domain" description="Cytoplasmic" evidence="1">
    <location>
        <begin position="237"/>
        <end position="244"/>
    </location>
</feature>
<feature type="transmembrane region" description="Helical" evidence="1">
    <location>
        <begin position="245"/>
        <end position="265"/>
    </location>
</feature>
<feature type="topological domain" description="Extracellular" evidence="1">
    <location>
        <begin position="266"/>
        <end position="270"/>
    </location>
</feature>
<feature type="transmembrane region" description="Helical" evidence="1">
    <location>
        <begin position="271"/>
        <end position="291"/>
    </location>
</feature>
<feature type="topological domain" description="Cytoplasmic" evidence="1">
    <location>
        <begin position="292"/>
        <end position="303"/>
    </location>
</feature>
<feature type="active site" evidence="1">
    <location>
        <position position="60"/>
    </location>
</feature>
<feature type="binding site" description="axial binding residue" evidence="1">
    <location>
        <position position="63"/>
    </location>
    <ligand>
        <name>heme o</name>
        <dbReference type="ChEBI" id="CHEBI:24480"/>
    </ligand>
    <ligandPart>
        <name>Fe</name>
        <dbReference type="ChEBI" id="CHEBI:18248"/>
    </ligandPart>
</feature>
<feature type="binding site" description="axial binding residue" evidence="1">
    <location>
        <position position="125"/>
    </location>
    <ligand>
        <name>heme o</name>
        <dbReference type="ChEBI" id="CHEBI:24480"/>
    </ligand>
    <ligandPart>
        <name>Fe</name>
        <dbReference type="ChEBI" id="CHEBI:18248"/>
    </ligandPart>
</feature>
<feature type="binding site" description="axial binding residue" evidence="1">
    <location>
        <position position="214"/>
    </location>
    <ligand>
        <name>heme b</name>
        <dbReference type="ChEBI" id="CHEBI:60344"/>
    </ligand>
    <ligandPart>
        <name>Fe</name>
        <dbReference type="ChEBI" id="CHEBI:18248"/>
    </ligandPart>
</feature>
<feature type="binding site" description="axial binding residue" evidence="1">
    <location>
        <position position="276"/>
    </location>
    <ligand>
        <name>heme b</name>
        <dbReference type="ChEBI" id="CHEBI:60344"/>
    </ligand>
    <ligandPart>
        <name>Fe</name>
        <dbReference type="ChEBI" id="CHEBI:18248"/>
    </ligandPart>
</feature>
<feature type="disulfide bond" description="Essential for catalytic activity" evidence="1">
    <location>
        <begin position="37"/>
        <end position="44"/>
    </location>
</feature>
<evidence type="ECO:0000255" key="1">
    <source>
        <dbReference type="HAMAP-Rule" id="MF_01664"/>
    </source>
</evidence>
<evidence type="ECO:0000305" key="2"/>
<gene>
    <name evidence="1" type="primary">ctaA</name>
    <name type="ordered locus">SaurJH9_1175</name>
</gene>
<organism>
    <name type="scientific">Staphylococcus aureus (strain JH9)</name>
    <dbReference type="NCBI Taxonomy" id="359786"/>
    <lineage>
        <taxon>Bacteria</taxon>
        <taxon>Bacillati</taxon>
        <taxon>Bacillota</taxon>
        <taxon>Bacilli</taxon>
        <taxon>Bacillales</taxon>
        <taxon>Staphylococcaceae</taxon>
        <taxon>Staphylococcus</taxon>
    </lineage>
</organism>
<keyword id="KW-1003">Cell membrane</keyword>
<keyword id="KW-1015">Disulfide bond</keyword>
<keyword id="KW-0350">Heme biosynthesis</keyword>
<keyword id="KW-0408">Iron</keyword>
<keyword id="KW-0472">Membrane</keyword>
<keyword id="KW-0479">Metal-binding</keyword>
<keyword id="KW-0560">Oxidoreductase</keyword>
<keyword id="KW-0812">Transmembrane</keyword>
<keyword id="KW-1133">Transmembrane helix</keyword>
<name>CTAA_STAA9</name>
<sequence length="303" mass="34060">MFGKKNLKWLGVVATLMMTFVQLGGALVTKTGSADGCGSSWPLCHGALIPEFFPIDTIIELSHRAVSALSLLMVLWLVITAWKHIGYIKEIKPLSIISVGFLLLQALIGAAAVIWQQNDYVLALHFGISLISFSSVFLITLIIFSIDQKYEADELYIKKPLRRLTWLMAIIIYCGVYTGALVRHADASLAYGGWPLPFHDLVPHSEQDWVQLTHRIMAFIVFTIIMITYIHAVKNYPNNRTVHYGYTAAFILVILQVITGALSIMTNVNLIIALFHALFITYLFGMTTYFIMLMLRSVRSDKQ</sequence>
<accession>A5IS02</accession>
<proteinExistence type="inferred from homology"/>
<reference key="1">
    <citation type="submission" date="2007-05" db="EMBL/GenBank/DDBJ databases">
        <title>Complete sequence of chromosome of Staphylococcus aureus subsp. aureus JH9.</title>
        <authorList>
            <consortium name="US DOE Joint Genome Institute"/>
            <person name="Copeland A."/>
            <person name="Lucas S."/>
            <person name="Lapidus A."/>
            <person name="Barry K."/>
            <person name="Detter J.C."/>
            <person name="Glavina del Rio T."/>
            <person name="Hammon N."/>
            <person name="Israni S."/>
            <person name="Pitluck S."/>
            <person name="Chain P."/>
            <person name="Malfatti S."/>
            <person name="Shin M."/>
            <person name="Vergez L."/>
            <person name="Schmutz J."/>
            <person name="Larimer F."/>
            <person name="Land M."/>
            <person name="Hauser L."/>
            <person name="Kyrpides N."/>
            <person name="Kim E."/>
            <person name="Tomasz A."/>
            <person name="Richardson P."/>
        </authorList>
    </citation>
    <scope>NUCLEOTIDE SEQUENCE [LARGE SCALE GENOMIC DNA]</scope>
    <source>
        <strain>JH9</strain>
    </source>
</reference>
<protein>
    <recommendedName>
        <fullName evidence="1">Heme A synthase</fullName>
        <shortName evidence="1">HAS</shortName>
        <ecNumber evidence="1">1.17.99.9</ecNumber>
    </recommendedName>
    <alternativeName>
        <fullName evidence="1">Cytochrome aa3-controlling protein</fullName>
    </alternativeName>
</protein>